<sequence>MDLPGPIHEILVLFGGFVLLLGGLGVVLLTNPTFSAFSLGLVLVCISLFYILLNSYFVAVAQLLIYVGAINVLIIFAVMFVNGSEWSKDKNFWTIGDGFTSLVCITIPFSLMTTIPDTSWYGILWTTRSNQIVEQGLINNVQQIGIHLATDFYLPFELISIILLVSLIGAITMARQ</sequence>
<geneLocation type="chloroplast"/>
<protein>
    <recommendedName>
        <fullName>NAD(P)H-quinone oxidoreductase subunit 6, chloroplastic</fullName>
        <ecNumber>7.1.1.-</ecNumber>
    </recommendedName>
    <alternativeName>
        <fullName>NAD(P)H dehydrogenase subunit 6</fullName>
    </alternativeName>
    <alternativeName>
        <fullName>NADH-plastoquinone oxidoreductase subunit 6</fullName>
    </alternativeName>
</protein>
<proteinExistence type="inferred from homology"/>
<evidence type="ECO:0000250" key="1"/>
<evidence type="ECO:0000255" key="2"/>
<evidence type="ECO:0000305" key="3"/>
<keyword id="KW-0150">Chloroplast</keyword>
<keyword id="KW-0472">Membrane</keyword>
<keyword id="KW-0520">NAD</keyword>
<keyword id="KW-0521">NADP</keyword>
<keyword id="KW-0934">Plastid</keyword>
<keyword id="KW-0618">Plastoquinone</keyword>
<keyword id="KW-0874">Quinone</keyword>
<keyword id="KW-1185">Reference proteome</keyword>
<keyword id="KW-0793">Thylakoid</keyword>
<keyword id="KW-1278">Translocase</keyword>
<keyword id="KW-0812">Transmembrane</keyword>
<keyword id="KW-1133">Transmembrane helix</keyword>
<keyword id="KW-0813">Transport</keyword>
<name>NU6C_ORYSI</name>
<reference key="1">
    <citation type="journal article" date="2004" name="Plant Physiol.">
        <title>A comparison of rice chloroplast genomes.</title>
        <authorList>
            <person name="Tang J."/>
            <person name="Xia H."/>
            <person name="Cao M."/>
            <person name="Zhang X."/>
            <person name="Zeng W."/>
            <person name="Hu S."/>
            <person name="Tong W."/>
            <person name="Wang J."/>
            <person name="Wang J."/>
            <person name="Yu J."/>
            <person name="Yang H."/>
            <person name="Zhu L."/>
        </authorList>
    </citation>
    <scope>NUCLEOTIDE SEQUENCE [LARGE SCALE GENOMIC DNA]</scope>
    <source>
        <strain>cv. 93-11</strain>
    </source>
</reference>
<dbReference type="EC" id="7.1.1.-"/>
<dbReference type="EMBL" id="AY522329">
    <property type="protein sequence ID" value="AAS46095.1"/>
    <property type="molecule type" value="Genomic_DNA"/>
</dbReference>
<dbReference type="RefSeq" id="YP_009161422.1">
    <property type="nucleotide sequence ID" value="NC_027678.1"/>
</dbReference>
<dbReference type="RefSeq" id="YP_654255.1">
    <property type="nucleotide sequence ID" value="NC_008155.1"/>
</dbReference>
<dbReference type="SMR" id="P0C330"/>
<dbReference type="STRING" id="39946.P0C330"/>
<dbReference type="GeneID" id="4126912"/>
<dbReference type="Proteomes" id="UP000007015">
    <property type="component" value="Chloroplast"/>
</dbReference>
<dbReference type="GO" id="GO:0009535">
    <property type="term" value="C:chloroplast thylakoid membrane"/>
    <property type="evidence" value="ECO:0007669"/>
    <property type="project" value="UniProtKB-SubCell"/>
</dbReference>
<dbReference type="GO" id="GO:0009536">
    <property type="term" value="C:plastid"/>
    <property type="evidence" value="ECO:0000305"/>
    <property type="project" value="Gramene"/>
</dbReference>
<dbReference type="GO" id="GO:0008137">
    <property type="term" value="F:NADH dehydrogenase (ubiquinone) activity"/>
    <property type="evidence" value="ECO:0007669"/>
    <property type="project" value="InterPro"/>
</dbReference>
<dbReference type="GO" id="GO:0048038">
    <property type="term" value="F:quinone binding"/>
    <property type="evidence" value="ECO:0007669"/>
    <property type="project" value="UniProtKB-KW"/>
</dbReference>
<dbReference type="FunFam" id="1.20.120.1200:FF:000002">
    <property type="entry name" value="NAD(P)H-quinone oxidoreductase subunit 6, chloroplastic"/>
    <property type="match status" value="1"/>
</dbReference>
<dbReference type="Gene3D" id="1.20.120.1200">
    <property type="entry name" value="NADH-ubiquinone/plastoquinone oxidoreductase chain 6, subunit NuoJ"/>
    <property type="match status" value="1"/>
</dbReference>
<dbReference type="InterPro" id="IPR050290">
    <property type="entry name" value="NAD(P)H-Q_Oxidoreduct_6"/>
</dbReference>
<dbReference type="InterPro" id="IPR001457">
    <property type="entry name" value="NADH_UbQ/plastoQ_OxRdtase_su6"/>
</dbReference>
<dbReference type="InterPro" id="IPR042106">
    <property type="entry name" value="Nuo/plastoQ_OxRdtase_6_NuoJ"/>
</dbReference>
<dbReference type="PANTHER" id="PTHR48479">
    <property type="entry name" value="NAD(P)H-QUINONE OXIDOREDUCTASE SUBUNIT 6, CHLOROPLASTIC"/>
    <property type="match status" value="1"/>
</dbReference>
<dbReference type="PANTHER" id="PTHR48479:SF1">
    <property type="entry name" value="NAD(P)H-QUINONE OXIDOREDUCTASE SUBUNIT 6, CHLOROPLASTIC"/>
    <property type="match status" value="1"/>
</dbReference>
<dbReference type="Pfam" id="PF00499">
    <property type="entry name" value="Oxidored_q3"/>
    <property type="match status" value="1"/>
</dbReference>
<accession>P0C330</accession>
<accession>P12130</accession>
<accession>Q6QY34</accession>
<accession>Q6Z1V8</accession>
<organism>
    <name type="scientific">Oryza sativa subsp. indica</name>
    <name type="common">Rice</name>
    <dbReference type="NCBI Taxonomy" id="39946"/>
    <lineage>
        <taxon>Eukaryota</taxon>
        <taxon>Viridiplantae</taxon>
        <taxon>Streptophyta</taxon>
        <taxon>Embryophyta</taxon>
        <taxon>Tracheophyta</taxon>
        <taxon>Spermatophyta</taxon>
        <taxon>Magnoliopsida</taxon>
        <taxon>Liliopsida</taxon>
        <taxon>Poales</taxon>
        <taxon>Poaceae</taxon>
        <taxon>BOP clade</taxon>
        <taxon>Oryzoideae</taxon>
        <taxon>Oryzeae</taxon>
        <taxon>Oryzinae</taxon>
        <taxon>Oryza</taxon>
        <taxon>Oryza sativa</taxon>
    </lineage>
</organism>
<feature type="chain" id="PRO_0000288698" description="NAD(P)H-quinone oxidoreductase subunit 6, chloroplastic">
    <location>
        <begin position="1"/>
        <end position="176"/>
    </location>
</feature>
<feature type="transmembrane region" description="Helical" evidence="2">
    <location>
        <begin position="10"/>
        <end position="30"/>
    </location>
</feature>
<feature type="transmembrane region" description="Helical" evidence="2">
    <location>
        <begin position="33"/>
        <end position="53"/>
    </location>
</feature>
<feature type="transmembrane region" description="Helical" evidence="2">
    <location>
        <begin position="60"/>
        <end position="80"/>
    </location>
</feature>
<feature type="transmembrane region" description="Helical" evidence="2">
    <location>
        <begin position="92"/>
        <end position="112"/>
    </location>
</feature>
<feature type="transmembrane region" description="Helical" evidence="2">
    <location>
        <begin position="152"/>
        <end position="172"/>
    </location>
</feature>
<gene>
    <name type="primary">ndhG</name>
    <name type="ORF">9311171</name>
</gene>
<comment type="function">
    <text evidence="1">NDH shuttles electrons from NAD(P)H:plastoquinone, via FMN and iron-sulfur (Fe-S) centers, to quinones in the photosynthetic chain and possibly in a chloroplast respiratory chain. The immediate electron acceptor for the enzyme in this species is believed to be plastoquinone. Couples the redox reaction to proton translocation, and thus conserves the redox energy in a proton gradient (By similarity).</text>
</comment>
<comment type="catalytic activity">
    <reaction>
        <text>a plastoquinone + NADH + (n+1) H(+)(in) = a plastoquinol + NAD(+) + n H(+)(out)</text>
        <dbReference type="Rhea" id="RHEA:42608"/>
        <dbReference type="Rhea" id="RHEA-COMP:9561"/>
        <dbReference type="Rhea" id="RHEA-COMP:9562"/>
        <dbReference type="ChEBI" id="CHEBI:15378"/>
        <dbReference type="ChEBI" id="CHEBI:17757"/>
        <dbReference type="ChEBI" id="CHEBI:57540"/>
        <dbReference type="ChEBI" id="CHEBI:57945"/>
        <dbReference type="ChEBI" id="CHEBI:62192"/>
    </reaction>
</comment>
<comment type="catalytic activity">
    <reaction>
        <text>a plastoquinone + NADPH + (n+1) H(+)(in) = a plastoquinol + NADP(+) + n H(+)(out)</text>
        <dbReference type="Rhea" id="RHEA:42612"/>
        <dbReference type="Rhea" id="RHEA-COMP:9561"/>
        <dbReference type="Rhea" id="RHEA-COMP:9562"/>
        <dbReference type="ChEBI" id="CHEBI:15378"/>
        <dbReference type="ChEBI" id="CHEBI:17757"/>
        <dbReference type="ChEBI" id="CHEBI:57783"/>
        <dbReference type="ChEBI" id="CHEBI:58349"/>
        <dbReference type="ChEBI" id="CHEBI:62192"/>
    </reaction>
</comment>
<comment type="subunit">
    <text evidence="1">NDH is composed of at least 16 different subunits, 5 of which are encoded in the nucleus.</text>
</comment>
<comment type="subcellular location">
    <subcellularLocation>
        <location evidence="1">Plastid</location>
        <location evidence="1">Chloroplast thylakoid membrane</location>
        <topology evidence="1">Multi-pass membrane protein</topology>
    </subcellularLocation>
</comment>
<comment type="similarity">
    <text evidence="3">Belongs to the complex I subunit 6 family.</text>
</comment>